<accession>A6QFH1</accession>
<feature type="chain" id="PRO_1000070922" description="Argininosuccinate lyase">
    <location>
        <begin position="1"/>
        <end position="459"/>
    </location>
</feature>
<protein>
    <recommendedName>
        <fullName evidence="1">Argininosuccinate lyase</fullName>
        <shortName evidence="1">ASAL</shortName>
        <ecNumber evidence="1">4.3.2.1</ecNumber>
    </recommendedName>
    <alternativeName>
        <fullName evidence="1">Arginosuccinase</fullName>
    </alternativeName>
</protein>
<evidence type="ECO:0000255" key="1">
    <source>
        <dbReference type="HAMAP-Rule" id="MF_00006"/>
    </source>
</evidence>
<dbReference type="EC" id="4.3.2.1" evidence="1"/>
<dbReference type="EMBL" id="AP009351">
    <property type="protein sequence ID" value="BAF67103.1"/>
    <property type="molecule type" value="Genomic_DNA"/>
</dbReference>
<dbReference type="RefSeq" id="WP_000066053.1">
    <property type="nucleotide sequence ID" value="NZ_JBBIAE010000002.1"/>
</dbReference>
<dbReference type="SMR" id="A6QFH1"/>
<dbReference type="KEGG" id="sae:NWMN_0831"/>
<dbReference type="HOGENOM" id="CLU_027272_2_3_9"/>
<dbReference type="UniPathway" id="UPA00068">
    <property type="reaction ID" value="UER00114"/>
</dbReference>
<dbReference type="Proteomes" id="UP000006386">
    <property type="component" value="Chromosome"/>
</dbReference>
<dbReference type="GO" id="GO:0005829">
    <property type="term" value="C:cytosol"/>
    <property type="evidence" value="ECO:0007669"/>
    <property type="project" value="TreeGrafter"/>
</dbReference>
<dbReference type="GO" id="GO:0004056">
    <property type="term" value="F:argininosuccinate lyase activity"/>
    <property type="evidence" value="ECO:0007669"/>
    <property type="project" value="UniProtKB-UniRule"/>
</dbReference>
<dbReference type="GO" id="GO:0042450">
    <property type="term" value="P:arginine biosynthetic process via ornithine"/>
    <property type="evidence" value="ECO:0007669"/>
    <property type="project" value="InterPro"/>
</dbReference>
<dbReference type="GO" id="GO:0006526">
    <property type="term" value="P:L-arginine biosynthetic process"/>
    <property type="evidence" value="ECO:0007669"/>
    <property type="project" value="UniProtKB-UniRule"/>
</dbReference>
<dbReference type="CDD" id="cd01359">
    <property type="entry name" value="Argininosuccinate_lyase"/>
    <property type="match status" value="1"/>
</dbReference>
<dbReference type="FunFam" id="1.10.275.10:FF:000002">
    <property type="entry name" value="Argininosuccinate lyase"/>
    <property type="match status" value="1"/>
</dbReference>
<dbReference type="FunFam" id="1.10.40.30:FF:000001">
    <property type="entry name" value="Argininosuccinate lyase"/>
    <property type="match status" value="1"/>
</dbReference>
<dbReference type="FunFam" id="1.20.200.10:FF:000006">
    <property type="entry name" value="Argininosuccinate lyase"/>
    <property type="match status" value="1"/>
</dbReference>
<dbReference type="Gene3D" id="1.10.40.30">
    <property type="entry name" value="Fumarase/aspartase (C-terminal domain)"/>
    <property type="match status" value="1"/>
</dbReference>
<dbReference type="Gene3D" id="1.20.200.10">
    <property type="entry name" value="Fumarase/aspartase (Central domain)"/>
    <property type="match status" value="1"/>
</dbReference>
<dbReference type="Gene3D" id="1.10.275.10">
    <property type="entry name" value="Fumarase/aspartase (N-terminal domain)"/>
    <property type="match status" value="1"/>
</dbReference>
<dbReference type="HAMAP" id="MF_00006">
    <property type="entry name" value="Arg_succ_lyase"/>
    <property type="match status" value="1"/>
</dbReference>
<dbReference type="InterPro" id="IPR029419">
    <property type="entry name" value="Arg_succ_lyase_C"/>
</dbReference>
<dbReference type="InterPro" id="IPR009049">
    <property type="entry name" value="Argininosuccinate_lyase"/>
</dbReference>
<dbReference type="InterPro" id="IPR024083">
    <property type="entry name" value="Fumarase/histidase_N"/>
</dbReference>
<dbReference type="InterPro" id="IPR020557">
    <property type="entry name" value="Fumarate_lyase_CS"/>
</dbReference>
<dbReference type="InterPro" id="IPR000362">
    <property type="entry name" value="Fumarate_lyase_fam"/>
</dbReference>
<dbReference type="InterPro" id="IPR022761">
    <property type="entry name" value="Fumarate_lyase_N"/>
</dbReference>
<dbReference type="InterPro" id="IPR008948">
    <property type="entry name" value="L-Aspartase-like"/>
</dbReference>
<dbReference type="NCBIfam" id="TIGR00838">
    <property type="entry name" value="argH"/>
    <property type="match status" value="1"/>
</dbReference>
<dbReference type="PANTHER" id="PTHR43814">
    <property type="entry name" value="ARGININOSUCCINATE LYASE"/>
    <property type="match status" value="1"/>
</dbReference>
<dbReference type="PANTHER" id="PTHR43814:SF1">
    <property type="entry name" value="ARGININOSUCCINATE LYASE"/>
    <property type="match status" value="1"/>
</dbReference>
<dbReference type="Pfam" id="PF14698">
    <property type="entry name" value="ASL_C2"/>
    <property type="match status" value="1"/>
</dbReference>
<dbReference type="Pfam" id="PF00206">
    <property type="entry name" value="Lyase_1"/>
    <property type="match status" value="1"/>
</dbReference>
<dbReference type="PRINTS" id="PR00145">
    <property type="entry name" value="ARGSUCLYASE"/>
</dbReference>
<dbReference type="PRINTS" id="PR00149">
    <property type="entry name" value="FUMRATELYASE"/>
</dbReference>
<dbReference type="SUPFAM" id="SSF48557">
    <property type="entry name" value="L-aspartase-like"/>
    <property type="match status" value="1"/>
</dbReference>
<dbReference type="PROSITE" id="PS00163">
    <property type="entry name" value="FUMARATE_LYASES"/>
    <property type="match status" value="1"/>
</dbReference>
<sequence length="459" mass="52017">MSNKAWGGRFEVQPEEWVDDFNASITFDQTLIDQDIEGSIAHATMLANQGIISQQDSEQIIQGLKSIQHDYHQDQIQFSASLEDIHLNIEHELIKRIGDAGGKLHTGRSRNDQVATDMHLYTKKQVQDIIALIKSLQSVIVDIASNNVDTIMPGYTHLQRAQPISFAHHIMTYFWMLQRDQQRFEDSLKRIDINPLGAAALSGTTYPIDRHETTALLNFGSLYENSLDAVSDRDYIIETLHNISLTMVHLSRFAEEIIFWSTDEAKFITLSDAFSTGSSIMPQKKNPDMAELIRGKVGRTTGHLMSMLMTLKGLPLAYNKDMQEDKEGLFDAVHTIKGSLRIFEGMIQTMTINKERLNQTVKEDFSNATELADYLVTKNIPFRTAHEIVGKIVLECIQQGHYLLDVPLATYQQHHSSIDADIYDYLQPENCLKRRQSYGSTGQSSVKQQLDVAKQLLSQ</sequence>
<name>ARLY_STAAE</name>
<keyword id="KW-0028">Amino-acid biosynthesis</keyword>
<keyword id="KW-0055">Arginine biosynthesis</keyword>
<keyword id="KW-0963">Cytoplasm</keyword>
<keyword id="KW-0456">Lyase</keyword>
<gene>
    <name evidence="1" type="primary">argH</name>
    <name type="ordered locus">NWMN_0831</name>
</gene>
<reference key="1">
    <citation type="journal article" date="2008" name="J. Bacteriol.">
        <title>Genome sequence of Staphylococcus aureus strain Newman and comparative analysis of staphylococcal genomes: polymorphism and evolution of two major pathogenicity islands.</title>
        <authorList>
            <person name="Baba T."/>
            <person name="Bae T."/>
            <person name="Schneewind O."/>
            <person name="Takeuchi F."/>
            <person name="Hiramatsu K."/>
        </authorList>
    </citation>
    <scope>NUCLEOTIDE SEQUENCE [LARGE SCALE GENOMIC DNA]</scope>
    <source>
        <strain>Newman</strain>
    </source>
</reference>
<comment type="catalytic activity">
    <reaction evidence="1">
        <text>2-(N(omega)-L-arginino)succinate = fumarate + L-arginine</text>
        <dbReference type="Rhea" id="RHEA:24020"/>
        <dbReference type="ChEBI" id="CHEBI:29806"/>
        <dbReference type="ChEBI" id="CHEBI:32682"/>
        <dbReference type="ChEBI" id="CHEBI:57472"/>
        <dbReference type="EC" id="4.3.2.1"/>
    </reaction>
</comment>
<comment type="pathway">
    <text evidence="1">Amino-acid biosynthesis; L-arginine biosynthesis; L-arginine from L-ornithine and carbamoyl phosphate: step 3/3.</text>
</comment>
<comment type="subcellular location">
    <subcellularLocation>
        <location evidence="1">Cytoplasm</location>
    </subcellularLocation>
</comment>
<comment type="similarity">
    <text evidence="1">Belongs to the lyase 1 family. Argininosuccinate lyase subfamily.</text>
</comment>
<proteinExistence type="inferred from homology"/>
<organism>
    <name type="scientific">Staphylococcus aureus (strain Newman)</name>
    <dbReference type="NCBI Taxonomy" id="426430"/>
    <lineage>
        <taxon>Bacteria</taxon>
        <taxon>Bacillati</taxon>
        <taxon>Bacillota</taxon>
        <taxon>Bacilli</taxon>
        <taxon>Bacillales</taxon>
        <taxon>Staphylococcaceae</taxon>
        <taxon>Staphylococcus</taxon>
    </lineage>
</organism>